<keyword id="KW-0963">Cytoplasm</keyword>
<keyword id="KW-0648">Protein biosynthesis</keyword>
<keyword id="KW-1185">Reference proteome</keyword>
<accession>Q831V2</accession>
<gene>
    <name evidence="1" type="primary">frr</name>
    <name type="ordered locus">EF_2395</name>
</gene>
<reference key="1">
    <citation type="journal article" date="2003" name="Science">
        <title>Role of mobile DNA in the evolution of vancomycin-resistant Enterococcus faecalis.</title>
        <authorList>
            <person name="Paulsen I.T."/>
            <person name="Banerjei L."/>
            <person name="Myers G.S.A."/>
            <person name="Nelson K.E."/>
            <person name="Seshadri R."/>
            <person name="Read T.D."/>
            <person name="Fouts D.E."/>
            <person name="Eisen J.A."/>
            <person name="Gill S.R."/>
            <person name="Heidelberg J.F."/>
            <person name="Tettelin H."/>
            <person name="Dodson R.J."/>
            <person name="Umayam L.A."/>
            <person name="Brinkac L.M."/>
            <person name="Beanan M.J."/>
            <person name="Daugherty S.C."/>
            <person name="DeBoy R.T."/>
            <person name="Durkin S.A."/>
            <person name="Kolonay J.F."/>
            <person name="Madupu R."/>
            <person name="Nelson W.C."/>
            <person name="Vamathevan J.J."/>
            <person name="Tran B."/>
            <person name="Upton J."/>
            <person name="Hansen T."/>
            <person name="Shetty J."/>
            <person name="Khouri H.M."/>
            <person name="Utterback T.R."/>
            <person name="Radune D."/>
            <person name="Ketchum K.A."/>
            <person name="Dougherty B.A."/>
            <person name="Fraser C.M."/>
        </authorList>
    </citation>
    <scope>NUCLEOTIDE SEQUENCE [LARGE SCALE GENOMIC DNA]</scope>
    <source>
        <strain>ATCC 700802 / V583</strain>
    </source>
</reference>
<comment type="function">
    <text evidence="1">Responsible for the release of ribosomes from messenger RNA at the termination of protein biosynthesis. May increase the efficiency of translation by recycling ribosomes from one round of translation to another.</text>
</comment>
<comment type="subcellular location">
    <subcellularLocation>
        <location evidence="1">Cytoplasm</location>
    </subcellularLocation>
</comment>
<comment type="similarity">
    <text evidence="1">Belongs to the RRF family.</text>
</comment>
<dbReference type="EMBL" id="AE016830">
    <property type="protein sequence ID" value="AAO82116.1"/>
    <property type="molecule type" value="Genomic_DNA"/>
</dbReference>
<dbReference type="RefSeq" id="NP_816046.1">
    <property type="nucleotide sequence ID" value="NC_004668.1"/>
</dbReference>
<dbReference type="RefSeq" id="WP_002356762.1">
    <property type="nucleotide sequence ID" value="NZ_KE136528.1"/>
</dbReference>
<dbReference type="SMR" id="Q831V2"/>
<dbReference type="STRING" id="226185.EF_2395"/>
<dbReference type="EnsemblBacteria" id="AAO82116">
    <property type="protein sequence ID" value="AAO82116"/>
    <property type="gene ID" value="EF_2395"/>
</dbReference>
<dbReference type="GeneID" id="60894448"/>
<dbReference type="KEGG" id="efa:EF2395"/>
<dbReference type="PATRIC" id="fig|226185.45.peg.1146"/>
<dbReference type="eggNOG" id="COG0233">
    <property type="taxonomic scope" value="Bacteria"/>
</dbReference>
<dbReference type="HOGENOM" id="CLU_073981_2_0_9"/>
<dbReference type="Proteomes" id="UP000001415">
    <property type="component" value="Chromosome"/>
</dbReference>
<dbReference type="GO" id="GO:0005737">
    <property type="term" value="C:cytoplasm"/>
    <property type="evidence" value="ECO:0007669"/>
    <property type="project" value="UniProtKB-SubCell"/>
</dbReference>
<dbReference type="GO" id="GO:0043023">
    <property type="term" value="F:ribosomal large subunit binding"/>
    <property type="evidence" value="ECO:0007669"/>
    <property type="project" value="TreeGrafter"/>
</dbReference>
<dbReference type="GO" id="GO:0006415">
    <property type="term" value="P:translational termination"/>
    <property type="evidence" value="ECO:0007669"/>
    <property type="project" value="UniProtKB-UniRule"/>
</dbReference>
<dbReference type="CDD" id="cd00520">
    <property type="entry name" value="RRF"/>
    <property type="match status" value="1"/>
</dbReference>
<dbReference type="FunFam" id="1.10.132.20:FF:000001">
    <property type="entry name" value="Ribosome-recycling factor"/>
    <property type="match status" value="1"/>
</dbReference>
<dbReference type="FunFam" id="3.30.1360.40:FF:000001">
    <property type="entry name" value="Ribosome-recycling factor"/>
    <property type="match status" value="1"/>
</dbReference>
<dbReference type="Gene3D" id="3.30.1360.40">
    <property type="match status" value="1"/>
</dbReference>
<dbReference type="Gene3D" id="1.10.132.20">
    <property type="entry name" value="Ribosome-recycling factor"/>
    <property type="match status" value="1"/>
</dbReference>
<dbReference type="HAMAP" id="MF_00040">
    <property type="entry name" value="RRF"/>
    <property type="match status" value="1"/>
</dbReference>
<dbReference type="InterPro" id="IPR002661">
    <property type="entry name" value="Ribosome_recyc_fac"/>
</dbReference>
<dbReference type="InterPro" id="IPR023584">
    <property type="entry name" value="Ribosome_recyc_fac_dom"/>
</dbReference>
<dbReference type="InterPro" id="IPR036191">
    <property type="entry name" value="RRF_sf"/>
</dbReference>
<dbReference type="NCBIfam" id="TIGR00496">
    <property type="entry name" value="frr"/>
    <property type="match status" value="1"/>
</dbReference>
<dbReference type="PANTHER" id="PTHR20982:SF3">
    <property type="entry name" value="MITOCHONDRIAL RIBOSOME RECYCLING FACTOR PSEUDO 1"/>
    <property type="match status" value="1"/>
</dbReference>
<dbReference type="PANTHER" id="PTHR20982">
    <property type="entry name" value="RIBOSOME RECYCLING FACTOR"/>
    <property type="match status" value="1"/>
</dbReference>
<dbReference type="Pfam" id="PF01765">
    <property type="entry name" value="RRF"/>
    <property type="match status" value="1"/>
</dbReference>
<dbReference type="SUPFAM" id="SSF55194">
    <property type="entry name" value="Ribosome recycling factor, RRF"/>
    <property type="match status" value="1"/>
</dbReference>
<feature type="chain" id="PRO_0000167459" description="Ribosome-recycling factor">
    <location>
        <begin position="1"/>
        <end position="185"/>
    </location>
</feature>
<sequence length="185" mass="20804">MSKEVLATAKEKMTKAEESLRRELGQIRAGRANASLLDRIQVEYYGAPTPVNQLASINIPEARVLMITPFDKNSIADIEKAIQMSDIGISPTNDGNVIRLVIPQLTEERRKELAKDVKKEAENSKVAVRNVRRDAMDELKKAQKNGDITEDELRSFEKDVQKLTDDSIKNIDAITAEKEQELLEV</sequence>
<evidence type="ECO:0000255" key="1">
    <source>
        <dbReference type="HAMAP-Rule" id="MF_00040"/>
    </source>
</evidence>
<organism>
    <name type="scientific">Enterococcus faecalis (strain ATCC 700802 / V583)</name>
    <dbReference type="NCBI Taxonomy" id="226185"/>
    <lineage>
        <taxon>Bacteria</taxon>
        <taxon>Bacillati</taxon>
        <taxon>Bacillota</taxon>
        <taxon>Bacilli</taxon>
        <taxon>Lactobacillales</taxon>
        <taxon>Enterococcaceae</taxon>
        <taxon>Enterococcus</taxon>
    </lineage>
</organism>
<proteinExistence type="inferred from homology"/>
<protein>
    <recommendedName>
        <fullName evidence="1">Ribosome-recycling factor</fullName>
        <shortName evidence="1">RRF</shortName>
    </recommendedName>
    <alternativeName>
        <fullName evidence="1">Ribosome-releasing factor</fullName>
    </alternativeName>
</protein>
<name>RRF_ENTFA</name>